<name>RL24_STAMF</name>
<dbReference type="EMBL" id="CP000575">
    <property type="protein sequence ID" value="ABN70128.1"/>
    <property type="molecule type" value="Genomic_DNA"/>
</dbReference>
<dbReference type="RefSeq" id="WP_011839319.1">
    <property type="nucleotide sequence ID" value="NC_009033.1"/>
</dbReference>
<dbReference type="SMR" id="A3DNB8"/>
<dbReference type="STRING" id="399550.Smar_1030"/>
<dbReference type="GeneID" id="4906891"/>
<dbReference type="KEGG" id="smr:Smar_1030"/>
<dbReference type="eggNOG" id="arCOG04094">
    <property type="taxonomic scope" value="Archaea"/>
</dbReference>
<dbReference type="HOGENOM" id="CLU_093240_2_1_2"/>
<dbReference type="OrthoDB" id="10899at2157"/>
<dbReference type="Proteomes" id="UP000000254">
    <property type="component" value="Chromosome"/>
</dbReference>
<dbReference type="GO" id="GO:0015934">
    <property type="term" value="C:large ribosomal subunit"/>
    <property type="evidence" value="ECO:0007669"/>
    <property type="project" value="InterPro"/>
</dbReference>
<dbReference type="GO" id="GO:0019843">
    <property type="term" value="F:rRNA binding"/>
    <property type="evidence" value="ECO:0007669"/>
    <property type="project" value="UniProtKB-UniRule"/>
</dbReference>
<dbReference type="GO" id="GO:0003735">
    <property type="term" value="F:structural constituent of ribosome"/>
    <property type="evidence" value="ECO:0007669"/>
    <property type="project" value="InterPro"/>
</dbReference>
<dbReference type="GO" id="GO:0006412">
    <property type="term" value="P:translation"/>
    <property type="evidence" value="ECO:0007669"/>
    <property type="project" value="UniProtKB-UniRule"/>
</dbReference>
<dbReference type="CDD" id="cd06089">
    <property type="entry name" value="KOW_RPL26"/>
    <property type="match status" value="1"/>
</dbReference>
<dbReference type="FunFam" id="2.30.30.30:FF:000009">
    <property type="entry name" value="60S ribosomal protein L26"/>
    <property type="match status" value="1"/>
</dbReference>
<dbReference type="Gene3D" id="2.30.30.30">
    <property type="match status" value="1"/>
</dbReference>
<dbReference type="HAMAP" id="MF_01326_A">
    <property type="entry name" value="Ribosomal_uL24_A"/>
    <property type="match status" value="1"/>
</dbReference>
<dbReference type="InterPro" id="IPR005824">
    <property type="entry name" value="KOW"/>
</dbReference>
<dbReference type="InterPro" id="IPR014722">
    <property type="entry name" value="Rib_uL2_dom2"/>
</dbReference>
<dbReference type="InterPro" id="IPR005825">
    <property type="entry name" value="Ribosomal_uL24_CS"/>
</dbReference>
<dbReference type="InterPro" id="IPR005756">
    <property type="entry name" value="Ribosomal_uL24_euk/arc"/>
</dbReference>
<dbReference type="InterPro" id="IPR041988">
    <property type="entry name" value="Ribosomal_uL24_KOW"/>
</dbReference>
<dbReference type="InterPro" id="IPR008991">
    <property type="entry name" value="Translation_prot_SH3-like_sf"/>
</dbReference>
<dbReference type="NCBIfam" id="TIGR01080">
    <property type="entry name" value="rplX_A_E"/>
    <property type="match status" value="1"/>
</dbReference>
<dbReference type="PANTHER" id="PTHR11143">
    <property type="entry name" value="60S RIBOSOMAL PROTEIN L26 FAMILY MEMBER"/>
    <property type="match status" value="1"/>
</dbReference>
<dbReference type="Pfam" id="PF00467">
    <property type="entry name" value="KOW"/>
    <property type="match status" value="1"/>
</dbReference>
<dbReference type="Pfam" id="PF16906">
    <property type="entry name" value="Ribosomal_L26"/>
    <property type="match status" value="1"/>
</dbReference>
<dbReference type="SMART" id="SM00739">
    <property type="entry name" value="KOW"/>
    <property type="match status" value="1"/>
</dbReference>
<dbReference type="SUPFAM" id="SSF50104">
    <property type="entry name" value="Translation proteins SH3-like domain"/>
    <property type="match status" value="1"/>
</dbReference>
<dbReference type="PROSITE" id="PS01108">
    <property type="entry name" value="RIBOSOMAL_L24"/>
    <property type="match status" value="1"/>
</dbReference>
<keyword id="KW-1185">Reference proteome</keyword>
<keyword id="KW-0687">Ribonucleoprotein</keyword>
<keyword id="KW-0689">Ribosomal protein</keyword>
<keyword id="KW-0694">RNA-binding</keyword>
<keyword id="KW-0699">rRNA-binding</keyword>
<proteinExistence type="inferred from homology"/>
<accession>A3DNB8</accession>
<protein>
    <recommendedName>
        <fullName evidence="1">Large ribosomal subunit protein uL24</fullName>
    </recommendedName>
    <alternativeName>
        <fullName evidence="3">50S ribosomal protein L24</fullName>
    </alternativeName>
</protein>
<sequence length="152" mass="17737">MAITYSSKPSKQRKALFNMPLHLRHKLFNAPLSKELREKYGVKKLPVRKGDVVRIMRGDWKGHEGKVVRIDLRRVRLYVEGVQRKKADQTPVYYPIHPSKVMIIKLDLSDKWRRKIIERRKGLIESEVVEEKETSKTSEGGGKTIEETEGEK</sequence>
<reference key="1">
    <citation type="journal article" date="2009" name="BMC Genomics">
        <title>The complete genome sequence of Staphylothermus marinus reveals differences in sulfur metabolism among heterotrophic Crenarchaeota.</title>
        <authorList>
            <person name="Anderson I.J."/>
            <person name="Dharmarajan L."/>
            <person name="Rodriguez J."/>
            <person name="Hooper S."/>
            <person name="Porat I."/>
            <person name="Ulrich L.E."/>
            <person name="Elkins J.G."/>
            <person name="Mavromatis K."/>
            <person name="Sun H."/>
            <person name="Land M."/>
            <person name="Lapidus A."/>
            <person name="Lucas S."/>
            <person name="Barry K."/>
            <person name="Huber H."/>
            <person name="Zhulin I.B."/>
            <person name="Whitman W.B."/>
            <person name="Mukhopadhyay B."/>
            <person name="Woese C."/>
            <person name="Bristow J."/>
            <person name="Kyrpides N."/>
        </authorList>
    </citation>
    <scope>NUCLEOTIDE SEQUENCE [LARGE SCALE GENOMIC DNA]</scope>
    <source>
        <strain>ATCC 43588 / DSM 3639 / JCM 9404 / F1</strain>
    </source>
</reference>
<reference key="2">
    <citation type="journal article" date="2009" name="Stand. Genomic Sci.">
        <title>Complete genome sequence of Staphylothermus marinus Stetter and Fiala 1986 type strain F1.</title>
        <authorList>
            <person name="Anderson I.J."/>
            <person name="Sun H."/>
            <person name="Lapidus A."/>
            <person name="Copeland A."/>
            <person name="Glavina Del Rio T."/>
            <person name="Tice H."/>
            <person name="Dalin E."/>
            <person name="Lucas S."/>
            <person name="Barry K."/>
            <person name="Land M."/>
            <person name="Richardson P."/>
            <person name="Huber H."/>
            <person name="Kyrpides N.C."/>
        </authorList>
    </citation>
    <scope>NUCLEOTIDE SEQUENCE [LARGE SCALE GENOMIC DNA]</scope>
    <source>
        <strain>ATCC 43588 / DSM 3639 / JCM 9404 / F1</strain>
    </source>
</reference>
<evidence type="ECO:0000255" key="1">
    <source>
        <dbReference type="HAMAP-Rule" id="MF_01326"/>
    </source>
</evidence>
<evidence type="ECO:0000256" key="2">
    <source>
        <dbReference type="SAM" id="MobiDB-lite"/>
    </source>
</evidence>
<evidence type="ECO:0000305" key="3"/>
<comment type="function">
    <text evidence="1">One of two assembly initiator proteins, it binds directly to the 5'-end of the 23S rRNA, where it nucleates assembly of the 50S subunit.</text>
</comment>
<comment type="function">
    <text evidence="1">Located at the polypeptide exit tunnel on the outside of the subunit.</text>
</comment>
<comment type="subunit">
    <text evidence="1">Part of the 50S ribosomal subunit.</text>
</comment>
<comment type="similarity">
    <text evidence="1">Belongs to the universal ribosomal protein uL24 family.</text>
</comment>
<feature type="chain" id="PRO_0000355739" description="Large ribosomal subunit protein uL24">
    <location>
        <begin position="1"/>
        <end position="152"/>
    </location>
</feature>
<feature type="region of interest" description="Disordered" evidence="2">
    <location>
        <begin position="128"/>
        <end position="152"/>
    </location>
</feature>
<gene>
    <name evidence="1" type="primary">rpl24</name>
    <name type="ordered locus">Smar_1030</name>
</gene>
<organism>
    <name type="scientific">Staphylothermus marinus (strain ATCC 43588 / DSM 3639 / JCM 9404 / F1)</name>
    <dbReference type="NCBI Taxonomy" id="399550"/>
    <lineage>
        <taxon>Archaea</taxon>
        <taxon>Thermoproteota</taxon>
        <taxon>Thermoprotei</taxon>
        <taxon>Desulfurococcales</taxon>
        <taxon>Desulfurococcaceae</taxon>
        <taxon>Staphylothermus</taxon>
    </lineage>
</organism>